<protein>
    <recommendedName>
        <fullName evidence="5">Alpha-humulene synthase asR6</fullName>
        <ecNumber evidence="3">4.2.3.104</ecNumber>
    </recommendedName>
    <alternativeName>
        <fullName evidence="5">Xenovulene A biosynthesis cluster protein R6</fullName>
    </alternativeName>
</protein>
<comment type="function">
    <text evidence="1 2 3">Alpha-humulene synthase; part of the gene cluster that mediates the biosynthesis of xenovulene A, an unusual meroterpenoid that has potent inhibitory effects on the human gamma-aminobutyrate A (GABAA) benzodiazepine receptor (PubMed:29773797). The first step of xenovulene A biosynthesis is the biosynthesis of 3-methylorcinaldehyde performed by the non-reducing polyketide synthase aspks1 (PubMed:17912413, PubMed:20552126, PubMed:29773797). The salicylate hydroxylase asL1 then catalyzes the oxidative dearomatization of 3-methylorcinaldehyde to yield a dearomatized hydroxycyclohexadione (PubMed:29773797). The 2-oxoglutarate-dependent dioxygenase asL3 further catalyzes the oxidative ring expansion to provide the first tropolone metabolite (PubMed:29773797). The cytochrome P450 monooxygenase asR2 allows the synthesis of tropolone hemiacetal (PubMed:29773797). In parallel, a previously unrecognised class of terpene cyclase, asR6, produces alpha-humulene from farnesylpyrophosphate (FPP) (PubMed:29773797). The putative Diels-Alderase asR5 probably catalyzes the formation of the tropolone-humulene skeleton by linking humulene and the polyketide moiety (PubMed:29773797). Oxidative-ring contractions catalyzed by asL4 and asL6 then processively remove carbon atoms from the polyketide to yield xenovulene A (PubMed:29773797).</text>
</comment>
<comment type="catalytic activity">
    <reaction evidence="3">
        <text>(2E,6E)-farnesyl diphosphate = alpha-humulene + diphosphate</text>
        <dbReference type="Rhea" id="RHEA:31895"/>
        <dbReference type="ChEBI" id="CHEBI:5768"/>
        <dbReference type="ChEBI" id="CHEBI:33019"/>
        <dbReference type="ChEBI" id="CHEBI:175763"/>
        <dbReference type="EC" id="4.2.3.104"/>
    </reaction>
    <physiologicalReaction direction="left-to-right" evidence="3">
        <dbReference type="Rhea" id="RHEA:31896"/>
    </physiologicalReaction>
</comment>
<comment type="cofactor">
    <cofactor evidence="3">
        <name>Mg(2+)</name>
        <dbReference type="ChEBI" id="CHEBI:18420"/>
    </cofactor>
</comment>
<comment type="pathway">
    <text evidence="3">Secondary metabolite biosynthesis; terpenoid biosynthesis.</text>
</comment>
<comment type="induction">
    <text evidence="3">Expression is significantly up-regulated under xenovulene A producing condition.</text>
</comment>
<comment type="biotechnology">
    <text evidence="4">Xenovulene A is a natural product exhibiting little structural resemblance with classical benzodiazepines yet is able to displace high-affinity ligand binding to the benzodiazepine site of the gamma-aminobutyrate A (GABAA) receptor and could be potentially used as an anti-depressant with reduced addictive properties.</text>
</comment>
<comment type="similarity">
    <text evidence="6">Belongs to the terpene synthase family. Alpha-humulene synthase eupE subfamily.</text>
</comment>
<organism>
    <name type="scientific">Sarocladium schorii</name>
    <name type="common">Acremonium strictum (strain IMI 501407)</name>
    <dbReference type="NCBI Taxonomy" id="2203296"/>
    <lineage>
        <taxon>Eukaryota</taxon>
        <taxon>Fungi</taxon>
        <taxon>Dikarya</taxon>
        <taxon>Ascomycota</taxon>
        <taxon>Pezizomycotina</taxon>
        <taxon>Sordariomycetes</taxon>
        <taxon>Hypocreomycetidae</taxon>
        <taxon>Hypocreales</taxon>
        <taxon>Sarocladiaceae</taxon>
        <taxon>Sarocladium</taxon>
    </lineage>
</organism>
<name>ASR6_SARSH</name>
<sequence>MPVTTPTKMATLTTKQMWQTIKDYFGDGFVTGSAPISYNVHTCDMQLQPDSGIHAASDGIHYGVQISEDSMPLFSIMGDTAAPPCTCHRVDEIVKHIDEFLERAPEALPDDGAITSGKPCDTNPDQVSLYAMRDSLSWWVHWGGNLRPEHYWKQIYIGFAAIPDDVQISPREFLDGTYRYLGHTWDDCLSGLEEEGVSPDEIEFANMCMWRQMLTQWLEKADPELLPLLKGKISLMLQYRVLTANTLGCLALFMNATADPKDGPIHYADSSYEMEIASVAQCVTLDMAKEAMGILQGERTEVVAGDRAQRKRELRWIYVRCMQILESQPHAHMLRRYGSAGLHYVPMMDRYLERVSGHTRFPIRDGAARILERFINRAELPKESEDINPNGRSLKVSAKMNGNGQLHHEVNGNAKLHLEAERPDVTTAVG</sequence>
<reference key="1">
    <citation type="journal article" date="2018" name="Nat. Commun.">
        <title>Three previously unrecognised classes of biosynthetic enzymes revealed during the production of xenovulene A.</title>
        <authorList>
            <person name="Schor R."/>
            <person name="Schotte C."/>
            <person name="Wibberg D."/>
            <person name="Kalinowski J."/>
            <person name="Cox R.J."/>
        </authorList>
    </citation>
    <scope>NUCLEOTIDE SEQUENCE [GENOMIC DNA]</scope>
    <scope>INDUCTION</scope>
    <scope>FUNCTION</scope>
    <scope>CATALYTIC ACTIVITY</scope>
    <scope>COFACTOR</scope>
    <scope>PATHWAY</scope>
</reference>
<reference key="2">
    <citation type="journal article" date="1997" name="J. Pharmacol. Exp. Ther.">
        <title>Regulation of neuronal and recombinant GABA(A) receptor ion channels by xenovulene A, a natural product isolated from Acremonium strictum.</title>
        <authorList>
            <person name="Thomas P."/>
            <person name="Sundaram H."/>
            <person name="Krishek B.J."/>
            <person name="Chazot P."/>
            <person name="Xie X."/>
            <person name="Bevan P."/>
            <person name="Brocchini S.J."/>
            <person name="Latham C.J."/>
            <person name="Charlton P."/>
            <person name="Moore M."/>
            <person name="Lewis S.J."/>
            <person name="Thornton D.M."/>
            <person name="Stephenson F.A."/>
            <person name="Smart T.G."/>
        </authorList>
    </citation>
    <scope>BIOTECHNOLOGY</scope>
</reference>
<reference key="3">
    <citation type="journal article" date="2007" name="Chem. Commun. (Camb.)">
        <title>Characterisation of 3-methylorcinaldehyde synthase (MOS) in Acremonium strictum: first observation of a reductive release mechanism during polyketide biosynthesis.</title>
        <authorList>
            <person name="Bailey A.M."/>
            <person name="Cox R.J."/>
            <person name="Harley K."/>
            <person name="Lazarus C.M."/>
            <person name="Simpson T.J."/>
            <person name="Skellam E."/>
        </authorList>
    </citation>
    <scope>FUNCTION</scope>
</reference>
<reference key="4">
    <citation type="journal article" date="2010" name="Chem. Commun. (Camb.)">
        <title>Catalytic role of the C-terminal domains of a fungal non-reducing polyketide synthase.</title>
        <authorList>
            <person name="Fisch K.M."/>
            <person name="Skellam E."/>
            <person name="Ivison D."/>
            <person name="Cox R.J."/>
            <person name="Bailey A.M."/>
            <person name="Lazarus C.M."/>
            <person name="Simpson T.J."/>
        </authorList>
    </citation>
    <scope>FUNCTION</scope>
</reference>
<gene>
    <name evidence="5" type="primary">asR6</name>
</gene>
<evidence type="ECO:0000269" key="1">
    <source>
    </source>
</evidence>
<evidence type="ECO:0000269" key="2">
    <source>
    </source>
</evidence>
<evidence type="ECO:0000269" key="3">
    <source>
    </source>
</evidence>
<evidence type="ECO:0000269" key="4">
    <source>
    </source>
</evidence>
<evidence type="ECO:0000303" key="5">
    <source>
    </source>
</evidence>
<evidence type="ECO:0000305" key="6"/>
<evidence type="ECO:0007829" key="7">
    <source>
        <dbReference type="PDB" id="7OC5"/>
    </source>
</evidence>
<evidence type="ECO:0007829" key="8">
    <source>
        <dbReference type="PDB" id="7OC6"/>
    </source>
</evidence>
<feature type="chain" id="PRO_0000449161" description="Alpha-humulene synthase asR6">
    <location>
        <begin position="1"/>
        <end position="430"/>
    </location>
</feature>
<feature type="helix" evidence="7">
    <location>
        <begin position="14"/>
        <end position="25"/>
    </location>
</feature>
<feature type="helix" evidence="7">
    <location>
        <begin position="42"/>
        <end position="44"/>
    </location>
</feature>
<feature type="helix" evidence="7">
    <location>
        <begin position="59"/>
        <end position="61"/>
    </location>
</feature>
<feature type="helix" evidence="7">
    <location>
        <begin position="68"/>
        <end position="73"/>
    </location>
</feature>
<feature type="helix" evidence="7">
    <location>
        <begin position="87"/>
        <end position="89"/>
    </location>
</feature>
<feature type="helix" evidence="7">
    <location>
        <begin position="90"/>
        <end position="103"/>
    </location>
</feature>
<feature type="turn" evidence="7">
    <location>
        <begin position="109"/>
        <end position="112"/>
    </location>
</feature>
<feature type="helix" evidence="7">
    <location>
        <begin position="124"/>
        <end position="142"/>
    </location>
</feature>
<feature type="helix" evidence="7">
    <location>
        <begin position="148"/>
        <end position="150"/>
    </location>
</feature>
<feature type="helix" evidence="7">
    <location>
        <begin position="151"/>
        <end position="161"/>
    </location>
</feature>
<feature type="helix" evidence="7">
    <location>
        <begin position="162"/>
        <end position="164"/>
    </location>
</feature>
<feature type="helix" evidence="7">
    <location>
        <begin position="170"/>
        <end position="175"/>
    </location>
</feature>
<feature type="helix" evidence="7">
    <location>
        <begin position="185"/>
        <end position="194"/>
    </location>
</feature>
<feature type="helix" evidence="7">
    <location>
        <begin position="199"/>
        <end position="221"/>
    </location>
</feature>
<feature type="helix" evidence="7">
    <location>
        <begin position="225"/>
        <end position="229"/>
    </location>
</feature>
<feature type="helix" evidence="7">
    <location>
        <begin position="233"/>
        <end position="244"/>
    </location>
</feature>
<feature type="helix" evidence="7">
    <location>
        <begin position="246"/>
        <end position="257"/>
    </location>
</feature>
<feature type="strand" evidence="8">
    <location>
        <begin position="260"/>
        <end position="262"/>
    </location>
</feature>
<feature type="helix" evidence="7">
    <location>
        <begin position="267"/>
        <end position="295"/>
    </location>
</feature>
<feature type="helix" evidence="7">
    <location>
        <begin position="305"/>
        <end position="326"/>
    </location>
</feature>
<feature type="helix" evidence="7">
    <location>
        <begin position="331"/>
        <end position="339"/>
    </location>
</feature>
<feature type="helix" evidence="7">
    <location>
        <begin position="341"/>
        <end position="347"/>
    </location>
</feature>
<feature type="helix" evidence="7">
    <location>
        <begin position="349"/>
        <end position="355"/>
    </location>
</feature>
<feature type="turn" evidence="7">
    <location>
        <begin position="356"/>
        <end position="358"/>
    </location>
</feature>
<feature type="helix" evidence="7">
    <location>
        <begin position="365"/>
        <end position="371"/>
    </location>
</feature>
<feature type="helix" evidence="7">
    <location>
        <begin position="372"/>
        <end position="374"/>
    </location>
</feature>
<feature type="helix" evidence="7">
    <location>
        <begin position="377"/>
        <end position="379"/>
    </location>
</feature>
<feature type="helix" evidence="7">
    <location>
        <begin position="382"/>
        <end position="384"/>
    </location>
</feature>
<feature type="helix" evidence="7">
    <location>
        <begin position="389"/>
        <end position="391"/>
    </location>
</feature>
<keyword id="KW-0002">3D-structure</keyword>
<keyword id="KW-0456">Lyase</keyword>
<keyword id="KW-0460">Magnesium</keyword>
<proteinExistence type="evidence at protein level"/>
<accession>A0A2U8U2L5</accession>
<dbReference type="EC" id="4.2.3.104" evidence="3"/>
<dbReference type="EMBL" id="MG736817">
    <property type="protein sequence ID" value="AWM95795.1"/>
    <property type="molecule type" value="Genomic_DNA"/>
</dbReference>
<dbReference type="PDB" id="7OC4">
    <property type="method" value="X-ray"/>
    <property type="resolution" value="2.03 A"/>
    <property type="chains" value="A/B=1-430"/>
</dbReference>
<dbReference type="PDB" id="7OC5">
    <property type="method" value="X-ray"/>
    <property type="resolution" value="2.01 A"/>
    <property type="chains" value="A/B=1-430"/>
</dbReference>
<dbReference type="PDB" id="7OC6">
    <property type="method" value="X-ray"/>
    <property type="resolution" value="2.01 A"/>
    <property type="chains" value="A=1-430"/>
</dbReference>
<dbReference type="PDBsum" id="7OC4"/>
<dbReference type="PDBsum" id="7OC5"/>
<dbReference type="PDBsum" id="7OC6"/>
<dbReference type="SMR" id="A0A2U8U2L5"/>
<dbReference type="UniPathway" id="UPA00213"/>
<dbReference type="GO" id="GO:0080017">
    <property type="term" value="F:alpha-humulene synthase activity"/>
    <property type="evidence" value="ECO:0007669"/>
    <property type="project" value="UniProtKB-EC"/>
</dbReference>
<dbReference type="GO" id="GO:0016114">
    <property type="term" value="P:terpenoid biosynthetic process"/>
    <property type="evidence" value="ECO:0007669"/>
    <property type="project" value="UniProtKB-UniPathway"/>
</dbReference>